<gene>
    <name evidence="6" type="ORF">HMPREF0262_01073</name>
</gene>
<proteinExistence type="evidence at protein level"/>
<name>12AH_CLOS4</name>
<evidence type="ECO:0000255" key="1">
    <source>
        <dbReference type="PROSITE-ProRule" id="PRU10001"/>
    </source>
</evidence>
<evidence type="ECO:0000269" key="2">
    <source>
    </source>
</evidence>
<evidence type="ECO:0000303" key="3">
    <source>
    </source>
</evidence>
<evidence type="ECO:0000305" key="4"/>
<evidence type="ECO:0000305" key="5">
    <source>
    </source>
</evidence>
<evidence type="ECO:0000312" key="6">
    <source>
        <dbReference type="EMBL" id="ERJ00208.1"/>
    </source>
</evidence>
<protein>
    <recommendedName>
        <fullName evidence="3">12alpha-hydroxysteroid dehydrogenase</fullName>
        <shortName evidence="3">HSDH</shortName>
        <ecNumber evidence="2">1.1.1.176</ecNumber>
    </recommendedName>
</protein>
<accession>P21215</accession>
<keyword id="KW-0088">Bile acid catabolism</keyword>
<keyword id="KW-0903">Direct protein sequencing</keyword>
<keyword id="KW-0442">Lipid degradation</keyword>
<keyword id="KW-0443">Lipid metabolism</keyword>
<keyword id="KW-0521">NADP</keyword>
<keyword id="KW-0560">Oxidoreductase</keyword>
<keyword id="KW-0753">Steroid metabolism</keyword>
<reference key="1">
    <citation type="submission" date="2013-07" db="EMBL/GenBank/DDBJ databases">
        <authorList>
            <person name="Weinstock G."/>
            <person name="Sodergren E."/>
            <person name="Wylie T."/>
            <person name="Fulton L."/>
            <person name="Fulton R."/>
            <person name="Fronick C."/>
            <person name="O'Laughlin M."/>
            <person name="Godfrey J."/>
            <person name="Miner T."/>
            <person name="Herter B."/>
            <person name="Appelbaum E."/>
            <person name="Cordes M."/>
            <person name="Lek S."/>
            <person name="Wollam A."/>
            <person name="Pepin K.H."/>
            <person name="Palsikar V.B."/>
            <person name="Mitreva M."/>
            <person name="Wilson R.K."/>
        </authorList>
    </citation>
    <scope>NUCLEOTIDE SEQUENCE [LARGE SCALE GENOMIC DNA]</scope>
    <source>
        <strain>ATCC 29733 / VPI C48-50</strain>
    </source>
</reference>
<reference key="2">
    <citation type="journal article" date="1991" name="Eur. J. Biochem.">
        <title>12 alpha-hydroxysteroid dehydrogenase from Clostridium group P, strain C 48-50. Production, purification and characterization.</title>
        <authorList>
            <person name="Braun M."/>
            <person name="Luensdorf H."/>
            <person name="Bueckmann A.F."/>
        </authorList>
    </citation>
    <scope>PROTEIN SEQUENCE OF 1-30</scope>
    <scope>FUNCTION</scope>
    <scope>CATALYTIC ACTIVITY</scope>
    <scope>BIOPHYSICOCHEMICAL PROPERTIES</scope>
    <scope>SUBUNIT</scope>
    <scope>REACTION MECHANISM</scope>
    <source>
        <strain>ATCC 29733 / VPI C48-50</strain>
    </source>
</reference>
<comment type="function">
    <text evidence="2">Catalyzes the oxidation of the 12alpha-hydroxy group of bile acids, like cholate and deoxycholate. Is also able to catalyze the reverse reaction in vitro. Is likely involved in an epimerization pathway of bile acids that converts hydroxy groups from alpha to beta positions via stable oxo-intermediates, which occurs in the human gut.</text>
</comment>
<comment type="catalytic activity">
    <reaction evidence="2">
        <text>cholate + NADP(+) = 3alpha,7alpha-dihydroxy-12-oxo-5beta-cholanate + NADPH + H(+)</text>
        <dbReference type="Rhea" id="RHEA:14129"/>
        <dbReference type="ChEBI" id="CHEBI:11901"/>
        <dbReference type="ChEBI" id="CHEBI:15378"/>
        <dbReference type="ChEBI" id="CHEBI:29747"/>
        <dbReference type="ChEBI" id="CHEBI:57783"/>
        <dbReference type="ChEBI" id="CHEBI:58349"/>
        <dbReference type="EC" id="1.1.1.176"/>
    </reaction>
    <physiologicalReaction direction="left-to-right" evidence="5">
        <dbReference type="Rhea" id="RHEA:14130"/>
    </physiologicalReaction>
</comment>
<comment type="catalytic activity">
    <reaction evidence="2">
        <text>deoxycholate + NADP(+) = 12-dehydrodeoxycholate + NADPH + H(+)</text>
        <dbReference type="Rhea" id="RHEA:84223"/>
        <dbReference type="ChEBI" id="CHEBI:15378"/>
        <dbReference type="ChEBI" id="CHEBI:23614"/>
        <dbReference type="ChEBI" id="CHEBI:57783"/>
        <dbReference type="ChEBI" id="CHEBI:58349"/>
        <dbReference type="ChEBI" id="CHEBI:233653"/>
    </reaction>
    <physiologicalReaction direction="left-to-right" evidence="5">
        <dbReference type="Rhea" id="RHEA:84224"/>
    </physiologicalReaction>
</comment>
<comment type="biophysicochemical properties">
    <kinetics>
        <KM evidence="2">35 uM for NADP(+) (at pH 8.0 and 25 degrees Celsius)</KM>
        <KM evidence="2">72 uM for cholate (at pH 8.0 and 25 degrees Celsius)</KM>
        <KM evidence="2">45 uM for deoxycholate (at pH 8.0 and 25 degrees Celsius)</KM>
        <KM evidence="2">8.5 uM for NADPH (at pH 8.0 and 25 degrees Celsius)</KM>
        <KM evidence="2">12 uM for 3alpha,7alpha-dihydroxy-12-oxo-5beta-cholanate (12-oxochenodeoxycholate) (at pH 8.0 and 25 degrees Celsius)</KM>
        <Vmax evidence="2">162.0 umol/min/mg enzyme for the oxidation of cholate with NADP(+) (at pH 8.0 and 25 degrees Celsius)</Vmax>
        <Vmax evidence="2">164.0 umol/min/mg enzyme for the oxidation of deoxycholate with NADP(+) (at pH 8.0 and 25 degrees Celsius)</Vmax>
        <Vmax evidence="2">67.0 umol/min/mg enzyme for the reduction of 3alpha,7alpha-dihydroxy-12-oxo-5beta-cholanate with NADPH (at pH 8.0 and 25 degrees Celsius)</Vmax>
    </kinetics>
    <phDependence>
        <text evidence="2">Optimum pH is 8.5-9.5 for the oxidation of cholate.</text>
    </phDependence>
    <temperatureDependence>
        <text evidence="2">Optimum temperature is 55 degrees Celsius for the oxidation of cholate. The thermostability of the enzyme is greatly increased in the presence of NADP.</text>
    </temperatureDependence>
</comment>
<comment type="subunit">
    <text evidence="2">Homotetramer.</text>
</comment>
<comment type="miscellaneous">
    <text evidence="2">Enzyme reaction proceeds through an ordered bi-bi mechanism, where NADP(+) binds first to the free enzyme before cholate, and 12-oxochenodeoxycholate leaves first followed by NADPH.</text>
</comment>
<comment type="similarity">
    <text evidence="4">Belongs to the short-chain dehydrogenases/reductases (SDR) family.</text>
</comment>
<dbReference type="EC" id="1.1.1.176" evidence="2"/>
<dbReference type="EMBL" id="AWTA01000038">
    <property type="protein sequence ID" value="ERJ00208.1"/>
    <property type="molecule type" value="Genomic_DNA"/>
</dbReference>
<dbReference type="PIR" id="S14099">
    <property type="entry name" value="S14099"/>
</dbReference>
<dbReference type="SMR" id="P21215"/>
<dbReference type="eggNOG" id="COG1028">
    <property type="taxonomic scope" value="Bacteria"/>
</dbReference>
<dbReference type="BioCyc" id="MetaCyc:MONOMER-15705"/>
<dbReference type="GO" id="GO:0047013">
    <property type="term" value="F:cholate 12-alpha dehydrogenase (NADP+) activity"/>
    <property type="evidence" value="ECO:0007669"/>
    <property type="project" value="UniProtKB-EC"/>
</dbReference>
<dbReference type="GO" id="GO:0030573">
    <property type="term" value="P:bile acid catabolic process"/>
    <property type="evidence" value="ECO:0007669"/>
    <property type="project" value="UniProtKB-KW"/>
</dbReference>
<dbReference type="GO" id="GO:0016042">
    <property type="term" value="P:lipid catabolic process"/>
    <property type="evidence" value="ECO:0007669"/>
    <property type="project" value="UniProtKB-KW"/>
</dbReference>
<dbReference type="InterPro" id="IPR036291">
    <property type="entry name" value="NAD(P)-bd_dom_sf"/>
</dbReference>
<dbReference type="SUPFAM" id="SSF51735">
    <property type="entry name" value="NAD(P)-binding Rossmann-fold domains"/>
    <property type="match status" value="1"/>
</dbReference>
<dbReference type="PROSITE" id="PS00061">
    <property type="entry name" value="ADH_SHORT"/>
    <property type="match status" value="1"/>
</dbReference>
<organism>
    <name type="scientific">Clostridium sp. (strain ATCC 29733 / VPI C48-50)</name>
    <dbReference type="NCBI Taxonomy" id="1507"/>
    <lineage>
        <taxon>Bacteria</taxon>
        <taxon>Bacillati</taxon>
        <taxon>Bacillota</taxon>
        <taxon>Clostridia</taxon>
        <taxon>Eubacteriales</taxon>
        <taxon>Clostridiaceae</taxon>
        <taxon>Clostridium</taxon>
    </lineage>
</organism>
<sequence>MGIFDGKVAIITGGGKAKSIGYGIAVAYAKEGANLVLTGRNEQKLLDAKEELERLYGIKVLPLAVDVTPSDESEDRVKEAVQKVIAEFGRIDVLINNAQASASGIPLSMQTKDHFDLGIYSGLYATFYYMRECYPYLKETQGSVINFASGAGLFGNVGQCSYAAAKEGIRGLSRVAATEWGKDNINVNVVCPLAMTAQLENFKLSYPEAYEKNLRGVPMGRFGDPELDIGRVCVQLGSPDFKYMSGETLTLEGGMGQRP</sequence>
<feature type="chain" id="PRO_0000064347" description="12alpha-hydroxysteroid dehydrogenase">
    <location>
        <begin position="1"/>
        <end position="259"/>
    </location>
</feature>
<feature type="active site" description="Proton acceptor" evidence="1">
    <location>
        <position position="162"/>
    </location>
</feature>